<name>AROQ2_AGRFC</name>
<keyword id="KW-0028">Amino-acid biosynthesis</keyword>
<keyword id="KW-0057">Aromatic amino acid biosynthesis</keyword>
<keyword id="KW-0456">Lyase</keyword>
<keyword id="KW-1185">Reference proteome</keyword>
<sequence>MSLFTILNGPNLNLLGQRQPEIYGYETLADVEADCRAIAEAAGHELFFAQSNREYELIDWIHEARGKSAGIVINPGAFTHTSVAILDALNAFEAPVIEVHISNIHKREVFRHHSYVSTRAEGVIAGLGIEGYGVALRHLINLFSRSS</sequence>
<evidence type="ECO:0000250" key="1"/>
<evidence type="ECO:0000305" key="2"/>
<accession>Q8U7B8</accession>
<proteinExistence type="inferred from homology"/>
<protein>
    <recommendedName>
        <fullName>3-dehydroquinate dehydratase 2</fullName>
        <shortName>3-dehydroquinase 2</shortName>
        <ecNumber>4.2.1.10</ecNumber>
    </recommendedName>
    <alternativeName>
        <fullName>Type II DHQase 2</fullName>
    </alternativeName>
</protein>
<feature type="chain" id="PRO_0000159864" description="3-dehydroquinate dehydratase 2">
    <location>
        <begin position="1"/>
        <end position="147"/>
    </location>
</feature>
<feature type="active site" description="Proton acceptor" evidence="1">
    <location>
        <position position="23"/>
    </location>
</feature>
<feature type="active site" description="Proton donor" evidence="1">
    <location>
        <position position="100"/>
    </location>
</feature>
<feature type="binding site" evidence="1">
    <location>
        <position position="74"/>
    </location>
    <ligand>
        <name>substrate</name>
    </ligand>
</feature>
<feature type="binding site" evidence="1">
    <location>
        <position position="80"/>
    </location>
    <ligand>
        <name>substrate</name>
    </ligand>
</feature>
<feature type="binding site" evidence="1">
    <location>
        <position position="87"/>
    </location>
    <ligand>
        <name>substrate</name>
    </ligand>
</feature>
<feature type="binding site" evidence="1">
    <location>
        <begin position="101"/>
        <end position="102"/>
    </location>
    <ligand>
        <name>substrate</name>
    </ligand>
</feature>
<feature type="binding site" evidence="1">
    <location>
        <position position="111"/>
    </location>
    <ligand>
        <name>substrate</name>
    </ligand>
</feature>
<feature type="site" description="Transition state stabilizer" evidence="1">
    <location>
        <position position="18"/>
    </location>
</feature>
<dbReference type="EC" id="4.2.1.10"/>
<dbReference type="EMBL" id="AE007870">
    <property type="protein sequence ID" value="AAK88912.2"/>
    <property type="molecule type" value="Genomic_DNA"/>
</dbReference>
<dbReference type="PIR" id="AG3113">
    <property type="entry name" value="AG3113"/>
</dbReference>
<dbReference type="PIR" id="F98173">
    <property type="entry name" value="F98173"/>
</dbReference>
<dbReference type="RefSeq" id="NP_356127.2">
    <property type="nucleotide sequence ID" value="NC_003063.2"/>
</dbReference>
<dbReference type="RefSeq" id="WP_010973935.1">
    <property type="nucleotide sequence ID" value="NC_003063.2"/>
</dbReference>
<dbReference type="SMR" id="Q8U7B8"/>
<dbReference type="STRING" id="176299.Atu4531"/>
<dbReference type="EnsemblBacteria" id="AAK88912">
    <property type="protein sequence ID" value="AAK88912"/>
    <property type="gene ID" value="Atu4531"/>
</dbReference>
<dbReference type="GeneID" id="1136405"/>
<dbReference type="KEGG" id="atu:Atu4531"/>
<dbReference type="PATRIC" id="fig|176299.10.peg.4337"/>
<dbReference type="eggNOG" id="COG0757">
    <property type="taxonomic scope" value="Bacteria"/>
</dbReference>
<dbReference type="HOGENOM" id="CLU_090968_2_0_5"/>
<dbReference type="OrthoDB" id="9790793at2"/>
<dbReference type="PhylomeDB" id="Q8U7B8"/>
<dbReference type="BioCyc" id="AGRO:ATU4531-MONOMER"/>
<dbReference type="UniPathway" id="UPA00053">
    <property type="reaction ID" value="UER00086"/>
</dbReference>
<dbReference type="Proteomes" id="UP000000813">
    <property type="component" value="Chromosome linear"/>
</dbReference>
<dbReference type="GO" id="GO:0003855">
    <property type="term" value="F:3-dehydroquinate dehydratase activity"/>
    <property type="evidence" value="ECO:0007669"/>
    <property type="project" value="UniProtKB-UniRule"/>
</dbReference>
<dbReference type="GO" id="GO:0008652">
    <property type="term" value="P:amino acid biosynthetic process"/>
    <property type="evidence" value="ECO:0007669"/>
    <property type="project" value="UniProtKB-KW"/>
</dbReference>
<dbReference type="GO" id="GO:0009073">
    <property type="term" value="P:aromatic amino acid family biosynthetic process"/>
    <property type="evidence" value="ECO:0007669"/>
    <property type="project" value="UniProtKB-KW"/>
</dbReference>
<dbReference type="GO" id="GO:0009423">
    <property type="term" value="P:chorismate biosynthetic process"/>
    <property type="evidence" value="ECO:0007669"/>
    <property type="project" value="UniProtKB-UniRule"/>
</dbReference>
<dbReference type="GO" id="GO:0019631">
    <property type="term" value="P:quinate catabolic process"/>
    <property type="evidence" value="ECO:0007669"/>
    <property type="project" value="TreeGrafter"/>
</dbReference>
<dbReference type="CDD" id="cd00466">
    <property type="entry name" value="DHQase_II"/>
    <property type="match status" value="1"/>
</dbReference>
<dbReference type="Gene3D" id="3.40.50.9100">
    <property type="entry name" value="Dehydroquinase, class II"/>
    <property type="match status" value="1"/>
</dbReference>
<dbReference type="HAMAP" id="MF_00169">
    <property type="entry name" value="AroQ"/>
    <property type="match status" value="1"/>
</dbReference>
<dbReference type="InterPro" id="IPR001874">
    <property type="entry name" value="DHquinase_II"/>
</dbReference>
<dbReference type="InterPro" id="IPR018509">
    <property type="entry name" value="DHquinase_II_CS"/>
</dbReference>
<dbReference type="InterPro" id="IPR036441">
    <property type="entry name" value="DHquinase_II_sf"/>
</dbReference>
<dbReference type="NCBIfam" id="TIGR01088">
    <property type="entry name" value="aroQ"/>
    <property type="match status" value="1"/>
</dbReference>
<dbReference type="NCBIfam" id="NF003805">
    <property type="entry name" value="PRK05395.1-2"/>
    <property type="match status" value="1"/>
</dbReference>
<dbReference type="NCBIfam" id="NF003806">
    <property type="entry name" value="PRK05395.1-3"/>
    <property type="match status" value="1"/>
</dbReference>
<dbReference type="NCBIfam" id="NF003807">
    <property type="entry name" value="PRK05395.1-4"/>
    <property type="match status" value="1"/>
</dbReference>
<dbReference type="PANTHER" id="PTHR21272">
    <property type="entry name" value="CATABOLIC 3-DEHYDROQUINASE"/>
    <property type="match status" value="1"/>
</dbReference>
<dbReference type="PANTHER" id="PTHR21272:SF3">
    <property type="entry name" value="CATABOLIC 3-DEHYDROQUINASE"/>
    <property type="match status" value="1"/>
</dbReference>
<dbReference type="Pfam" id="PF01220">
    <property type="entry name" value="DHquinase_II"/>
    <property type="match status" value="1"/>
</dbReference>
<dbReference type="PIRSF" id="PIRSF001399">
    <property type="entry name" value="DHquinase_II"/>
    <property type="match status" value="1"/>
</dbReference>
<dbReference type="SUPFAM" id="SSF52304">
    <property type="entry name" value="Type II 3-dehydroquinate dehydratase"/>
    <property type="match status" value="1"/>
</dbReference>
<dbReference type="PROSITE" id="PS01029">
    <property type="entry name" value="DEHYDROQUINASE_II"/>
    <property type="match status" value="1"/>
</dbReference>
<organism>
    <name type="scientific">Agrobacterium fabrum (strain C58 / ATCC 33970)</name>
    <name type="common">Agrobacterium tumefaciens (strain C58)</name>
    <dbReference type="NCBI Taxonomy" id="176299"/>
    <lineage>
        <taxon>Bacteria</taxon>
        <taxon>Pseudomonadati</taxon>
        <taxon>Pseudomonadota</taxon>
        <taxon>Alphaproteobacteria</taxon>
        <taxon>Hyphomicrobiales</taxon>
        <taxon>Rhizobiaceae</taxon>
        <taxon>Rhizobium/Agrobacterium group</taxon>
        <taxon>Agrobacterium</taxon>
        <taxon>Agrobacterium tumefaciens complex</taxon>
    </lineage>
</organism>
<gene>
    <name type="primary">aroQ2</name>
    <name type="ordered locus">Atu4531</name>
    <name type="ORF">AGR_L_675</name>
</gene>
<reference key="1">
    <citation type="journal article" date="2001" name="Science">
        <title>The genome of the natural genetic engineer Agrobacterium tumefaciens C58.</title>
        <authorList>
            <person name="Wood D.W."/>
            <person name="Setubal J.C."/>
            <person name="Kaul R."/>
            <person name="Monks D.E."/>
            <person name="Kitajima J.P."/>
            <person name="Okura V.K."/>
            <person name="Zhou Y."/>
            <person name="Chen L."/>
            <person name="Wood G.E."/>
            <person name="Almeida N.F. Jr."/>
            <person name="Woo L."/>
            <person name="Chen Y."/>
            <person name="Paulsen I.T."/>
            <person name="Eisen J.A."/>
            <person name="Karp P.D."/>
            <person name="Bovee D. Sr."/>
            <person name="Chapman P."/>
            <person name="Clendenning J."/>
            <person name="Deatherage G."/>
            <person name="Gillet W."/>
            <person name="Grant C."/>
            <person name="Kutyavin T."/>
            <person name="Levy R."/>
            <person name="Li M.-J."/>
            <person name="McClelland E."/>
            <person name="Palmieri A."/>
            <person name="Raymond C."/>
            <person name="Rouse G."/>
            <person name="Saenphimmachak C."/>
            <person name="Wu Z."/>
            <person name="Romero P."/>
            <person name="Gordon D."/>
            <person name="Zhang S."/>
            <person name="Yoo H."/>
            <person name="Tao Y."/>
            <person name="Biddle P."/>
            <person name="Jung M."/>
            <person name="Krespan W."/>
            <person name="Perry M."/>
            <person name="Gordon-Kamm B."/>
            <person name="Liao L."/>
            <person name="Kim S."/>
            <person name="Hendrick C."/>
            <person name="Zhao Z.-Y."/>
            <person name="Dolan M."/>
            <person name="Chumley F."/>
            <person name="Tingey S.V."/>
            <person name="Tomb J.-F."/>
            <person name="Gordon M.P."/>
            <person name="Olson M.V."/>
            <person name="Nester E.W."/>
        </authorList>
    </citation>
    <scope>NUCLEOTIDE SEQUENCE [LARGE SCALE GENOMIC DNA]</scope>
    <source>
        <strain>C58 / ATCC 33970</strain>
    </source>
</reference>
<reference key="2">
    <citation type="journal article" date="2001" name="Science">
        <title>Genome sequence of the plant pathogen and biotechnology agent Agrobacterium tumefaciens C58.</title>
        <authorList>
            <person name="Goodner B."/>
            <person name="Hinkle G."/>
            <person name="Gattung S."/>
            <person name="Miller N."/>
            <person name="Blanchard M."/>
            <person name="Qurollo B."/>
            <person name="Goldman B.S."/>
            <person name="Cao Y."/>
            <person name="Askenazi M."/>
            <person name="Halling C."/>
            <person name="Mullin L."/>
            <person name="Houmiel K."/>
            <person name="Gordon J."/>
            <person name="Vaudin M."/>
            <person name="Iartchouk O."/>
            <person name="Epp A."/>
            <person name="Liu F."/>
            <person name="Wollam C."/>
            <person name="Allinger M."/>
            <person name="Doughty D."/>
            <person name="Scott C."/>
            <person name="Lappas C."/>
            <person name="Markelz B."/>
            <person name="Flanagan C."/>
            <person name="Crowell C."/>
            <person name="Gurson J."/>
            <person name="Lomo C."/>
            <person name="Sear C."/>
            <person name="Strub G."/>
            <person name="Cielo C."/>
            <person name="Slater S."/>
        </authorList>
    </citation>
    <scope>NUCLEOTIDE SEQUENCE [LARGE SCALE GENOMIC DNA]</scope>
    <source>
        <strain>C58 / ATCC 33970</strain>
    </source>
</reference>
<comment type="function">
    <text evidence="1">Catalyzes a trans-dehydration via an enolate intermediate.</text>
</comment>
<comment type="catalytic activity">
    <reaction>
        <text>3-dehydroquinate = 3-dehydroshikimate + H2O</text>
        <dbReference type="Rhea" id="RHEA:21096"/>
        <dbReference type="ChEBI" id="CHEBI:15377"/>
        <dbReference type="ChEBI" id="CHEBI:16630"/>
        <dbReference type="ChEBI" id="CHEBI:32364"/>
        <dbReference type="EC" id="4.2.1.10"/>
    </reaction>
</comment>
<comment type="pathway">
    <text>Metabolic intermediate biosynthesis; chorismate biosynthesis; chorismate from D-erythrose 4-phosphate and phosphoenolpyruvate: step 3/7.</text>
</comment>
<comment type="subunit">
    <text evidence="1">Homododecamer.</text>
</comment>
<comment type="similarity">
    <text evidence="2">Belongs to the type-II 3-dehydroquinase family.</text>
</comment>